<dbReference type="EMBL" id="CP000721">
    <property type="protein sequence ID" value="ABR37190.1"/>
    <property type="molecule type" value="Genomic_DNA"/>
</dbReference>
<dbReference type="RefSeq" id="WP_012061233.1">
    <property type="nucleotide sequence ID" value="NC_009617.1"/>
</dbReference>
<dbReference type="SMR" id="A6M3L0"/>
<dbReference type="GeneID" id="66348046"/>
<dbReference type="KEGG" id="cbe:Cbei_5084"/>
<dbReference type="eggNOG" id="COG0238">
    <property type="taxonomic scope" value="Bacteria"/>
</dbReference>
<dbReference type="HOGENOM" id="CLU_148710_2_2_9"/>
<dbReference type="Proteomes" id="UP000000565">
    <property type="component" value="Chromosome"/>
</dbReference>
<dbReference type="GO" id="GO:0022627">
    <property type="term" value="C:cytosolic small ribosomal subunit"/>
    <property type="evidence" value="ECO:0007669"/>
    <property type="project" value="TreeGrafter"/>
</dbReference>
<dbReference type="GO" id="GO:0070181">
    <property type="term" value="F:small ribosomal subunit rRNA binding"/>
    <property type="evidence" value="ECO:0007669"/>
    <property type="project" value="TreeGrafter"/>
</dbReference>
<dbReference type="GO" id="GO:0003735">
    <property type="term" value="F:structural constituent of ribosome"/>
    <property type="evidence" value="ECO:0007669"/>
    <property type="project" value="InterPro"/>
</dbReference>
<dbReference type="GO" id="GO:0006412">
    <property type="term" value="P:translation"/>
    <property type="evidence" value="ECO:0007669"/>
    <property type="project" value="UniProtKB-UniRule"/>
</dbReference>
<dbReference type="FunFam" id="4.10.640.10:FF:000004">
    <property type="entry name" value="30S ribosomal protein S18"/>
    <property type="match status" value="1"/>
</dbReference>
<dbReference type="Gene3D" id="4.10.640.10">
    <property type="entry name" value="Ribosomal protein S18"/>
    <property type="match status" value="1"/>
</dbReference>
<dbReference type="HAMAP" id="MF_00270">
    <property type="entry name" value="Ribosomal_bS18"/>
    <property type="match status" value="1"/>
</dbReference>
<dbReference type="InterPro" id="IPR001648">
    <property type="entry name" value="Ribosomal_bS18"/>
</dbReference>
<dbReference type="InterPro" id="IPR018275">
    <property type="entry name" value="Ribosomal_bS18_CS"/>
</dbReference>
<dbReference type="InterPro" id="IPR036870">
    <property type="entry name" value="Ribosomal_bS18_sf"/>
</dbReference>
<dbReference type="NCBIfam" id="TIGR00165">
    <property type="entry name" value="S18"/>
    <property type="match status" value="1"/>
</dbReference>
<dbReference type="PANTHER" id="PTHR13479">
    <property type="entry name" value="30S RIBOSOMAL PROTEIN S18"/>
    <property type="match status" value="1"/>
</dbReference>
<dbReference type="PANTHER" id="PTHR13479:SF40">
    <property type="entry name" value="SMALL RIBOSOMAL SUBUNIT PROTEIN BS18M"/>
    <property type="match status" value="1"/>
</dbReference>
<dbReference type="Pfam" id="PF01084">
    <property type="entry name" value="Ribosomal_S18"/>
    <property type="match status" value="1"/>
</dbReference>
<dbReference type="PRINTS" id="PR00974">
    <property type="entry name" value="RIBOSOMALS18"/>
</dbReference>
<dbReference type="SUPFAM" id="SSF46911">
    <property type="entry name" value="Ribosomal protein S18"/>
    <property type="match status" value="1"/>
</dbReference>
<dbReference type="PROSITE" id="PS00057">
    <property type="entry name" value="RIBOSOMAL_S18"/>
    <property type="match status" value="1"/>
</dbReference>
<accession>A6M3L0</accession>
<keyword id="KW-0687">Ribonucleoprotein</keyword>
<keyword id="KW-0689">Ribosomal protein</keyword>
<keyword id="KW-0694">RNA-binding</keyword>
<keyword id="KW-0699">rRNA-binding</keyword>
<comment type="function">
    <text evidence="1">Binds as a heterodimer with protein bS6 to the central domain of the 16S rRNA, where it helps stabilize the platform of the 30S subunit.</text>
</comment>
<comment type="subunit">
    <text evidence="1">Part of the 30S ribosomal subunit. Forms a tight heterodimer with protein bS6.</text>
</comment>
<comment type="similarity">
    <text evidence="1">Belongs to the bacterial ribosomal protein bS18 family.</text>
</comment>
<feature type="chain" id="PRO_1000078696" description="Small ribosomal subunit protein bS18">
    <location>
        <begin position="1"/>
        <end position="86"/>
    </location>
</feature>
<feature type="region of interest" description="Disordered" evidence="2">
    <location>
        <begin position="1"/>
        <end position="20"/>
    </location>
</feature>
<sequence length="86" mass="9984">MSREEGNNGRRPGGKMRRSRKKVCAFCVDKAEFIDYKDINKLRKYVTERGKILPRRISGTCAKHQRELTSSIKRARNIALLPFTTE</sequence>
<reference key="1">
    <citation type="submission" date="2007-06" db="EMBL/GenBank/DDBJ databases">
        <title>Complete sequence of Clostridium beijerinckii NCIMB 8052.</title>
        <authorList>
            <consortium name="US DOE Joint Genome Institute"/>
            <person name="Copeland A."/>
            <person name="Lucas S."/>
            <person name="Lapidus A."/>
            <person name="Barry K."/>
            <person name="Detter J.C."/>
            <person name="Glavina del Rio T."/>
            <person name="Hammon N."/>
            <person name="Israni S."/>
            <person name="Dalin E."/>
            <person name="Tice H."/>
            <person name="Pitluck S."/>
            <person name="Sims D."/>
            <person name="Brettin T."/>
            <person name="Bruce D."/>
            <person name="Tapia R."/>
            <person name="Brainard J."/>
            <person name="Schmutz J."/>
            <person name="Larimer F."/>
            <person name="Land M."/>
            <person name="Hauser L."/>
            <person name="Kyrpides N."/>
            <person name="Mikhailova N."/>
            <person name="Bennet G."/>
            <person name="Cann I."/>
            <person name="Chen J.-S."/>
            <person name="Contreras A.L."/>
            <person name="Jones D."/>
            <person name="Kashket E."/>
            <person name="Mitchell W."/>
            <person name="Stoddard S."/>
            <person name="Schwarz W."/>
            <person name="Qureshi N."/>
            <person name="Young M."/>
            <person name="Shi Z."/>
            <person name="Ezeji T."/>
            <person name="White B."/>
            <person name="Blaschek H."/>
            <person name="Richardson P."/>
        </authorList>
    </citation>
    <scope>NUCLEOTIDE SEQUENCE [LARGE SCALE GENOMIC DNA]</scope>
    <source>
        <strain>ATCC 51743 / NCIMB 8052</strain>
    </source>
</reference>
<evidence type="ECO:0000255" key="1">
    <source>
        <dbReference type="HAMAP-Rule" id="MF_00270"/>
    </source>
</evidence>
<evidence type="ECO:0000256" key="2">
    <source>
        <dbReference type="SAM" id="MobiDB-lite"/>
    </source>
</evidence>
<evidence type="ECO:0000305" key="3"/>
<name>RS18_CLOB8</name>
<gene>
    <name evidence="1" type="primary">rpsR</name>
    <name type="ordered locus">Cbei_5084</name>
</gene>
<organism>
    <name type="scientific">Clostridium beijerinckii (strain ATCC 51743 / NCIMB 8052)</name>
    <name type="common">Clostridium acetobutylicum</name>
    <dbReference type="NCBI Taxonomy" id="290402"/>
    <lineage>
        <taxon>Bacteria</taxon>
        <taxon>Bacillati</taxon>
        <taxon>Bacillota</taxon>
        <taxon>Clostridia</taxon>
        <taxon>Eubacteriales</taxon>
        <taxon>Clostridiaceae</taxon>
        <taxon>Clostridium</taxon>
    </lineage>
</organism>
<protein>
    <recommendedName>
        <fullName evidence="1">Small ribosomal subunit protein bS18</fullName>
    </recommendedName>
    <alternativeName>
        <fullName evidence="3">30S ribosomal protein S18</fullName>
    </alternativeName>
</protein>
<proteinExistence type="inferred from homology"/>